<proteinExistence type="inferred from homology"/>
<keyword id="KW-0046">Antibiotic resistance</keyword>
<keyword id="KW-0196">Cycloheximide resistance</keyword>
<keyword id="KW-0687">Ribonucleoprotein</keyword>
<keyword id="KW-0689">Ribosomal protein</keyword>
<organism>
    <name type="scientific">Chlamydomonas reinhardtii</name>
    <name type="common">Chlamydomonas smithii</name>
    <dbReference type="NCBI Taxonomy" id="3055"/>
    <lineage>
        <taxon>Eukaryota</taxon>
        <taxon>Viridiplantae</taxon>
        <taxon>Chlorophyta</taxon>
        <taxon>core chlorophytes</taxon>
        <taxon>Chlorophyceae</taxon>
        <taxon>CS clade</taxon>
        <taxon>Chlamydomonadales</taxon>
        <taxon>Chlamydomonadaceae</taxon>
        <taxon>Chlamydomonas</taxon>
    </lineage>
</organism>
<evidence type="ECO:0000250" key="1"/>
<evidence type="ECO:0000305" key="2"/>
<feature type="initiator methionine" description="Removed" evidence="1">
    <location>
        <position position="1"/>
    </location>
</feature>
<feature type="chain" id="PRO_0000149132" description="Large ribosomal subunit protein eL42">
    <location>
        <begin position="2"/>
        <end position="99"/>
    </location>
</feature>
<feature type="sequence variant" description="Confers resistance to cycloheximide, an inhibitor of polypeptide elongation.">
    <original>P</original>
    <variation>L</variation>
    <location>
        <position position="54"/>
    </location>
</feature>
<feature type="sequence variant" description="Confers resistance to cycloheximide, an inhibitor of polypeptide elongation.">
    <original>P</original>
    <variation>S</variation>
    <location>
        <position position="54"/>
    </location>
</feature>
<sequence length="99" mass="11421">MVNVPKTKRAFCKGCKKHMMMKVTQYKTGKASLYAQGKRRYDRKQSGYGGQTKPVFHKKAKTTKKIVLRMQCQECKQTCMKGLKRCKHFEIGGDKKKGN</sequence>
<gene>
    <name type="primary">RPL44</name>
    <name type="synonym">RPL41</name>
</gene>
<comment type="similarity">
    <text evidence="2">Belongs to the eukaryotic ribosomal protein eL42 family.</text>
</comment>
<accession>P49213</accession>
<name>RL44_CHLRE</name>
<reference key="1">
    <citation type="submission" date="1995-07" db="EMBL/GenBank/DDBJ databases">
        <authorList>
            <person name="Steven D.R."/>
            <person name="Atteia A."/>
            <person name="Franzen L.-G."/>
            <person name="Purton S."/>
        </authorList>
    </citation>
    <scope>NUCLEOTIDE SEQUENCE</scope>
    <source>
        <strain>137C / CW15</strain>
    </source>
</reference>
<reference key="2">
    <citation type="submission" date="1999-03" db="EMBL/GenBank/DDBJ databases">
        <title>Novel mutations in ribosomal protein L41 confer cycloheximide resistance in Chlamydomonas reinhardtii.</title>
        <authorList>
            <person name="Steven D.R."/>
            <person name="Atteia A."/>
            <person name="Franzen L.-G."/>
            <person name="Purton S."/>
        </authorList>
    </citation>
    <scope>NUCLEOTIDE SEQUENCE</scope>
    <source>
        <strain>137C / CW15</strain>
    </source>
</reference>
<protein>
    <recommendedName>
        <fullName evidence="2">Large ribosomal subunit protein eL42</fullName>
    </recommendedName>
    <alternativeName>
        <fullName>60S ribosomal protein L44</fullName>
    </alternativeName>
    <alternativeName>
        <fullName>L41</fullName>
    </alternativeName>
</protein>
<dbReference type="EMBL" id="U31912">
    <property type="protein sequence ID" value="AAB08435.1"/>
    <property type="molecule type" value="mRNA"/>
</dbReference>
<dbReference type="EMBL" id="AF130727">
    <property type="protein sequence ID" value="AAD22491.1"/>
    <property type="molecule type" value="Genomic_DNA"/>
</dbReference>
<dbReference type="PIR" id="T08060">
    <property type="entry name" value="T08060"/>
</dbReference>
<dbReference type="RefSeq" id="XP_001691337.1">
    <property type="nucleotide sequence ID" value="XM_001691285.1"/>
</dbReference>
<dbReference type="SMR" id="P49213"/>
<dbReference type="PaxDb" id="3055-EDP05070"/>
<dbReference type="ProMEX" id="P49213"/>
<dbReference type="EnsemblPlants" id="PNW83197">
    <property type="protein sequence ID" value="PNW83197"/>
    <property type="gene ID" value="CHLRE_06g310700v5"/>
</dbReference>
<dbReference type="Gramene" id="PNW83197">
    <property type="protein sequence ID" value="PNW83197"/>
    <property type="gene ID" value="CHLRE_06g310700v5"/>
</dbReference>
<dbReference type="KEGG" id="cre:CHLRE_06g310700v5"/>
<dbReference type="eggNOG" id="KOG3464">
    <property type="taxonomic scope" value="Eukaryota"/>
</dbReference>
<dbReference type="HOGENOM" id="CLU_114645_2_1_1"/>
<dbReference type="OMA" id="CKKHTIH"/>
<dbReference type="OrthoDB" id="1875375at2759"/>
<dbReference type="GO" id="GO:1990904">
    <property type="term" value="C:ribonucleoprotein complex"/>
    <property type="evidence" value="ECO:0007669"/>
    <property type="project" value="UniProtKB-KW"/>
</dbReference>
<dbReference type="GO" id="GO:0005840">
    <property type="term" value="C:ribosome"/>
    <property type="evidence" value="ECO:0007669"/>
    <property type="project" value="UniProtKB-KW"/>
</dbReference>
<dbReference type="GO" id="GO:0003735">
    <property type="term" value="F:structural constituent of ribosome"/>
    <property type="evidence" value="ECO:0007669"/>
    <property type="project" value="InterPro"/>
</dbReference>
<dbReference type="GO" id="GO:0046677">
    <property type="term" value="P:response to antibiotic"/>
    <property type="evidence" value="ECO:0007669"/>
    <property type="project" value="UniProtKB-KW"/>
</dbReference>
<dbReference type="GO" id="GO:0046898">
    <property type="term" value="P:response to cycloheximide"/>
    <property type="evidence" value="ECO:0007669"/>
    <property type="project" value="UniProtKB-KW"/>
</dbReference>
<dbReference type="GO" id="GO:0006412">
    <property type="term" value="P:translation"/>
    <property type="evidence" value="ECO:0007669"/>
    <property type="project" value="InterPro"/>
</dbReference>
<dbReference type="FunFam" id="3.10.450.80:FF:000001">
    <property type="entry name" value="60S ribosomal protein L44"/>
    <property type="match status" value="1"/>
</dbReference>
<dbReference type="Gene3D" id="3.10.450.80">
    <property type="match status" value="1"/>
</dbReference>
<dbReference type="InterPro" id="IPR000552">
    <property type="entry name" value="Ribosomal_eL44"/>
</dbReference>
<dbReference type="InterPro" id="IPR053708">
    <property type="entry name" value="Ribosomal_LSU_eL42"/>
</dbReference>
<dbReference type="InterPro" id="IPR011332">
    <property type="entry name" value="Ribosomal_zn-bd"/>
</dbReference>
<dbReference type="PANTHER" id="PTHR10369">
    <property type="entry name" value="60S RIBOSOMAL PROTEIN L36A/L44"/>
    <property type="match status" value="1"/>
</dbReference>
<dbReference type="Pfam" id="PF00935">
    <property type="entry name" value="Ribosomal_L44"/>
    <property type="match status" value="1"/>
</dbReference>
<dbReference type="SUPFAM" id="SSF57829">
    <property type="entry name" value="Zn-binding ribosomal proteins"/>
    <property type="match status" value="1"/>
</dbReference>
<dbReference type="PROSITE" id="PS01172">
    <property type="entry name" value="RIBOSOMAL_L44E"/>
    <property type="match status" value="1"/>
</dbReference>